<comment type="function">
    <text evidence="1">This protein is located at the 30S-50S ribosomal subunit interface and may play a role in the structure and function of the aminoacyl-tRNA binding site.</text>
</comment>
<comment type="similarity">
    <text evidence="1">Belongs to the bacterial ribosomal protein bL19 family.</text>
</comment>
<organism>
    <name type="scientific">Bradyrhizobium sp. (strain BTAi1 / ATCC BAA-1182)</name>
    <dbReference type="NCBI Taxonomy" id="288000"/>
    <lineage>
        <taxon>Bacteria</taxon>
        <taxon>Pseudomonadati</taxon>
        <taxon>Pseudomonadota</taxon>
        <taxon>Alphaproteobacteria</taxon>
        <taxon>Hyphomicrobiales</taxon>
        <taxon>Nitrobacteraceae</taxon>
        <taxon>Bradyrhizobium</taxon>
    </lineage>
</organism>
<sequence length="127" mass="14324">MNLIQQLEKEQFDKLSANKTIPEFGPGDTVIVNVKVVEGDRTRVQAYEGVCIGRSGGGINESFTVRKISYGEGVERVFPILSPMIDSIKVVRRGKVRRAKLYYLRQLRGKSARIVEKQDRQQAAVNE</sequence>
<gene>
    <name evidence="1" type="primary">rplS</name>
    <name type="ordered locus">BBta_0364</name>
</gene>
<protein>
    <recommendedName>
        <fullName evidence="1">Large ribosomal subunit protein bL19</fullName>
    </recommendedName>
    <alternativeName>
        <fullName evidence="2">50S ribosomal protein L19</fullName>
    </alternativeName>
</protein>
<evidence type="ECO:0000255" key="1">
    <source>
        <dbReference type="HAMAP-Rule" id="MF_00402"/>
    </source>
</evidence>
<evidence type="ECO:0000305" key="2"/>
<reference key="1">
    <citation type="journal article" date="2007" name="Science">
        <title>Legumes symbioses: absence of nod genes in photosynthetic bradyrhizobia.</title>
        <authorList>
            <person name="Giraud E."/>
            <person name="Moulin L."/>
            <person name="Vallenet D."/>
            <person name="Barbe V."/>
            <person name="Cytryn E."/>
            <person name="Avarre J.-C."/>
            <person name="Jaubert M."/>
            <person name="Simon D."/>
            <person name="Cartieaux F."/>
            <person name="Prin Y."/>
            <person name="Bena G."/>
            <person name="Hannibal L."/>
            <person name="Fardoux J."/>
            <person name="Kojadinovic M."/>
            <person name="Vuillet L."/>
            <person name="Lajus A."/>
            <person name="Cruveiller S."/>
            <person name="Rouy Z."/>
            <person name="Mangenot S."/>
            <person name="Segurens B."/>
            <person name="Dossat C."/>
            <person name="Franck W.L."/>
            <person name="Chang W.-S."/>
            <person name="Saunders E."/>
            <person name="Bruce D."/>
            <person name="Richardson P."/>
            <person name="Normand P."/>
            <person name="Dreyfus B."/>
            <person name="Pignol D."/>
            <person name="Stacey G."/>
            <person name="Emerich D."/>
            <person name="Vermeglio A."/>
            <person name="Medigue C."/>
            <person name="Sadowsky M."/>
        </authorList>
    </citation>
    <scope>NUCLEOTIDE SEQUENCE [LARGE SCALE GENOMIC DNA]</scope>
    <source>
        <strain>BTAi1 / ATCC BAA-1182</strain>
    </source>
</reference>
<name>RL19_BRASB</name>
<dbReference type="EMBL" id="CP000494">
    <property type="protein sequence ID" value="ABQ32651.1"/>
    <property type="molecule type" value="Genomic_DNA"/>
</dbReference>
<dbReference type="RefSeq" id="WP_012040705.1">
    <property type="nucleotide sequence ID" value="NC_009485.1"/>
</dbReference>
<dbReference type="SMR" id="A5E907"/>
<dbReference type="STRING" id="288000.BBta_0364"/>
<dbReference type="KEGG" id="bbt:BBta_0364"/>
<dbReference type="eggNOG" id="COG0335">
    <property type="taxonomic scope" value="Bacteria"/>
</dbReference>
<dbReference type="HOGENOM" id="CLU_103507_2_1_5"/>
<dbReference type="OrthoDB" id="9803541at2"/>
<dbReference type="Proteomes" id="UP000000246">
    <property type="component" value="Chromosome"/>
</dbReference>
<dbReference type="GO" id="GO:0022625">
    <property type="term" value="C:cytosolic large ribosomal subunit"/>
    <property type="evidence" value="ECO:0007669"/>
    <property type="project" value="TreeGrafter"/>
</dbReference>
<dbReference type="GO" id="GO:0003735">
    <property type="term" value="F:structural constituent of ribosome"/>
    <property type="evidence" value="ECO:0007669"/>
    <property type="project" value="InterPro"/>
</dbReference>
<dbReference type="GO" id="GO:0006412">
    <property type="term" value="P:translation"/>
    <property type="evidence" value="ECO:0007669"/>
    <property type="project" value="UniProtKB-UniRule"/>
</dbReference>
<dbReference type="FunFam" id="2.30.30.790:FF:000001">
    <property type="entry name" value="50S ribosomal protein L19"/>
    <property type="match status" value="1"/>
</dbReference>
<dbReference type="Gene3D" id="2.30.30.790">
    <property type="match status" value="1"/>
</dbReference>
<dbReference type="HAMAP" id="MF_00402">
    <property type="entry name" value="Ribosomal_bL19"/>
    <property type="match status" value="1"/>
</dbReference>
<dbReference type="InterPro" id="IPR001857">
    <property type="entry name" value="Ribosomal_bL19"/>
</dbReference>
<dbReference type="InterPro" id="IPR018257">
    <property type="entry name" value="Ribosomal_bL19_CS"/>
</dbReference>
<dbReference type="InterPro" id="IPR038657">
    <property type="entry name" value="Ribosomal_bL19_sf"/>
</dbReference>
<dbReference type="InterPro" id="IPR008991">
    <property type="entry name" value="Translation_prot_SH3-like_sf"/>
</dbReference>
<dbReference type="NCBIfam" id="TIGR01024">
    <property type="entry name" value="rplS_bact"/>
    <property type="match status" value="1"/>
</dbReference>
<dbReference type="PANTHER" id="PTHR15680:SF9">
    <property type="entry name" value="LARGE RIBOSOMAL SUBUNIT PROTEIN BL19M"/>
    <property type="match status" value="1"/>
</dbReference>
<dbReference type="PANTHER" id="PTHR15680">
    <property type="entry name" value="RIBOSOMAL PROTEIN L19"/>
    <property type="match status" value="1"/>
</dbReference>
<dbReference type="Pfam" id="PF01245">
    <property type="entry name" value="Ribosomal_L19"/>
    <property type="match status" value="1"/>
</dbReference>
<dbReference type="PIRSF" id="PIRSF002191">
    <property type="entry name" value="Ribosomal_L19"/>
    <property type="match status" value="1"/>
</dbReference>
<dbReference type="PRINTS" id="PR00061">
    <property type="entry name" value="RIBOSOMALL19"/>
</dbReference>
<dbReference type="SUPFAM" id="SSF50104">
    <property type="entry name" value="Translation proteins SH3-like domain"/>
    <property type="match status" value="1"/>
</dbReference>
<dbReference type="PROSITE" id="PS01015">
    <property type="entry name" value="RIBOSOMAL_L19"/>
    <property type="match status" value="1"/>
</dbReference>
<accession>A5E907</accession>
<proteinExistence type="inferred from homology"/>
<keyword id="KW-1185">Reference proteome</keyword>
<keyword id="KW-0687">Ribonucleoprotein</keyword>
<keyword id="KW-0689">Ribosomal protein</keyword>
<feature type="chain" id="PRO_1000049639" description="Large ribosomal subunit protein bL19">
    <location>
        <begin position="1"/>
        <end position="127"/>
    </location>
</feature>